<dbReference type="EMBL" id="DS028183">
    <property type="protein sequence ID" value="EEY67823.1"/>
    <property type="molecule type" value="Genomic_DNA"/>
</dbReference>
<dbReference type="RefSeq" id="XP_002997848.1">
    <property type="nucleotide sequence ID" value="XM_002997802.1"/>
</dbReference>
<dbReference type="SMR" id="D0NXM3"/>
<dbReference type="STRING" id="403677.D0NXM3"/>
<dbReference type="GlyCosmos" id="D0NXM3">
    <property type="glycosylation" value="1 site, No reported glycans"/>
</dbReference>
<dbReference type="EnsemblProtists" id="PITG_18215T0">
    <property type="protein sequence ID" value="PITG_18215T0"/>
    <property type="gene ID" value="PITG_18215"/>
</dbReference>
<dbReference type="GeneID" id="9463553"/>
<dbReference type="KEGG" id="pif:PITG_18215"/>
<dbReference type="VEuPathDB" id="FungiDB:PITG_18215"/>
<dbReference type="eggNOG" id="ENOG502RGPZ">
    <property type="taxonomic scope" value="Eukaryota"/>
</dbReference>
<dbReference type="HOGENOM" id="CLU_120310_0_0_1"/>
<dbReference type="InParanoid" id="D0NXM3"/>
<dbReference type="OMA" id="QNWDALV"/>
<dbReference type="OrthoDB" id="126519at2759"/>
<dbReference type="PHI-base" id="PHI:10635"/>
<dbReference type="PHI-base" id="PHI:4206"/>
<dbReference type="Proteomes" id="UP000006643">
    <property type="component" value="Partially assembled WGS sequence"/>
</dbReference>
<dbReference type="GO" id="GO:0005576">
    <property type="term" value="C:extracellular region"/>
    <property type="evidence" value="ECO:0007669"/>
    <property type="project" value="UniProtKB-SubCell"/>
</dbReference>
<dbReference type="GO" id="GO:0030430">
    <property type="term" value="C:host cell cytoplasm"/>
    <property type="evidence" value="ECO:0007669"/>
    <property type="project" value="UniProtKB-SubCell"/>
</dbReference>
<dbReference type="GO" id="GO:0020002">
    <property type="term" value="C:host cell plasma membrane"/>
    <property type="evidence" value="ECO:0007669"/>
    <property type="project" value="UniProtKB-SubCell"/>
</dbReference>
<dbReference type="GO" id="GO:0016020">
    <property type="term" value="C:membrane"/>
    <property type="evidence" value="ECO:0007669"/>
    <property type="project" value="UniProtKB-KW"/>
</dbReference>
<name>SFI7_PHYIT</name>
<organism>
    <name type="scientific">Phytophthora infestans (strain T30-4)</name>
    <name type="common">Potato late blight agent</name>
    <dbReference type="NCBI Taxonomy" id="403677"/>
    <lineage>
        <taxon>Eukaryota</taxon>
        <taxon>Sar</taxon>
        <taxon>Stramenopiles</taxon>
        <taxon>Oomycota</taxon>
        <taxon>Peronosporales</taxon>
        <taxon>Peronosporaceae</taxon>
        <taxon>Phytophthora</taxon>
    </lineage>
</organism>
<accession>D0NXM3</accession>
<keyword id="KW-0325">Glycoprotein</keyword>
<keyword id="KW-1032">Host cell membrane</keyword>
<keyword id="KW-1035">Host cytoplasm</keyword>
<keyword id="KW-1043">Host membrane</keyword>
<keyword id="KW-0472">Membrane</keyword>
<keyword id="KW-1185">Reference proteome</keyword>
<keyword id="KW-0964">Secreted</keyword>
<keyword id="KW-0732">Signal</keyword>
<keyword id="KW-0843">Virulence</keyword>
<evidence type="ECO:0000255" key="1"/>
<evidence type="ECO:0000255" key="2">
    <source>
        <dbReference type="PROSITE-ProRule" id="PRU00498"/>
    </source>
</evidence>
<evidence type="ECO:0000269" key="3">
    <source>
    </source>
</evidence>
<evidence type="ECO:0000303" key="4">
    <source>
    </source>
</evidence>
<evidence type="ECO:0000305" key="5"/>
<evidence type="ECO:0000305" key="6">
    <source>
    </source>
</evidence>
<proteinExistence type="inferred from homology"/>
<protein>
    <recommendedName>
        <fullName evidence="4">RxLR effector protein SFI7</fullName>
    </recommendedName>
    <alternativeName>
        <fullName evidence="4">Suppressor of early Flg22-induced immune response 7</fullName>
    </alternativeName>
</protein>
<reference key="1">
    <citation type="journal article" date="2009" name="Nature">
        <title>Genome sequence and analysis of the Irish potato famine pathogen Phytophthora infestans.</title>
        <authorList>
            <consortium name="The Broad Institute Genome Sequencing Platform"/>
            <person name="Haas B.J."/>
            <person name="Kamoun S."/>
            <person name="Zody M.C."/>
            <person name="Jiang R.H."/>
            <person name="Handsaker R.E."/>
            <person name="Cano L.M."/>
            <person name="Grabherr M."/>
            <person name="Kodira C.D."/>
            <person name="Raffaele S."/>
            <person name="Torto-Alalibo T."/>
            <person name="Bozkurt T.O."/>
            <person name="Ah-Fong A.M."/>
            <person name="Alvarado L."/>
            <person name="Anderson V.L."/>
            <person name="Armstrong M.R."/>
            <person name="Avrova A."/>
            <person name="Baxter L."/>
            <person name="Beynon J."/>
            <person name="Boevink P.C."/>
            <person name="Bollmann S.R."/>
            <person name="Bos J.I."/>
            <person name="Bulone V."/>
            <person name="Cai G."/>
            <person name="Cakir C."/>
            <person name="Carrington J.C."/>
            <person name="Chawner M."/>
            <person name="Conti L."/>
            <person name="Costanzo S."/>
            <person name="Ewan R."/>
            <person name="Fahlgren N."/>
            <person name="Fischbach M.A."/>
            <person name="Fugelstad J."/>
            <person name="Gilroy E.M."/>
            <person name="Gnerre S."/>
            <person name="Green P.J."/>
            <person name="Grenville-Briggs L.J."/>
            <person name="Griffith J."/>
            <person name="Grunwald N.J."/>
            <person name="Horn K."/>
            <person name="Horner N.R."/>
            <person name="Hu C.H."/>
            <person name="Huitema E."/>
            <person name="Jeong D.H."/>
            <person name="Jones A.M."/>
            <person name="Jones J.D."/>
            <person name="Jones R.W."/>
            <person name="Karlsson E.K."/>
            <person name="Kunjeti S.G."/>
            <person name="Lamour K."/>
            <person name="Liu Z."/>
            <person name="Ma L."/>
            <person name="Maclean D."/>
            <person name="Chibucos M.C."/>
            <person name="McDonald H."/>
            <person name="McWalters J."/>
            <person name="Meijer H.J."/>
            <person name="Morgan W."/>
            <person name="Morris P.F."/>
            <person name="Munro C.A."/>
            <person name="O'Neill K."/>
            <person name="Ospina-Giraldo M."/>
            <person name="Pinzon A."/>
            <person name="Pritchard L."/>
            <person name="Ramsahoye B."/>
            <person name="Ren Q."/>
            <person name="Restrepo S."/>
            <person name="Roy S."/>
            <person name="Sadanandom A."/>
            <person name="Savidor A."/>
            <person name="Schornack S."/>
            <person name="Schwartz D.C."/>
            <person name="Schumann U.D."/>
            <person name="Schwessinger B."/>
            <person name="Seyer L."/>
            <person name="Sharpe T."/>
            <person name="Silvar C."/>
            <person name="Song J."/>
            <person name="Studholme D.J."/>
            <person name="Sykes S."/>
            <person name="Thines M."/>
            <person name="van de Vondervoort P.J."/>
            <person name="Phuntumart V."/>
            <person name="Wawra S."/>
            <person name="Weide R."/>
            <person name="Win J."/>
            <person name="Young C."/>
            <person name="Zhou S."/>
            <person name="Fry W."/>
            <person name="Meyers B.C."/>
            <person name="van West P."/>
            <person name="Ristaino J."/>
            <person name="Govers F."/>
            <person name="Birch P.R."/>
            <person name="Whisson S.C."/>
            <person name="Judelson H.S."/>
            <person name="Nusbaum C."/>
        </authorList>
    </citation>
    <scope>NUCLEOTIDE SEQUENCE [LARGE SCALE GENOMIC DNA]</scope>
    <source>
        <strain>T30-4</strain>
    </source>
</reference>
<reference key="2">
    <citation type="journal article" date="2014" name="PLoS Pathog.">
        <title>Functionally redundant RXLR effectors from Phytophthora infestans act at different steps to suppress early flg22-triggered immunity.</title>
        <authorList>
            <person name="Zheng X."/>
            <person name="McLellan H."/>
            <person name="Fraiture M."/>
            <person name="Liu X."/>
            <person name="Boevink P.C."/>
            <person name="Gilroy E.M."/>
            <person name="Chen Y."/>
            <person name="Kandel K."/>
            <person name="Sessa G."/>
            <person name="Birch P.R."/>
            <person name="Brunner F."/>
        </authorList>
    </citation>
    <scope>FUNCTION</scope>
    <scope>SUBCELLULAR LOCATION</scope>
</reference>
<feature type="signal peptide" evidence="1">
    <location>
        <begin position="1"/>
        <end position="22"/>
    </location>
</feature>
<feature type="chain" id="PRO_5003013718" description="RxLR effector protein SFI7">
    <location>
        <begin position="23"/>
        <end position="148"/>
    </location>
</feature>
<feature type="short sequence motif" description="RxLR-dEER" evidence="6">
    <location>
        <begin position="44"/>
        <end position="58"/>
    </location>
</feature>
<feature type="glycosylation site" description="N-linked (GlcNAc...) asparagine" evidence="2">
    <location>
        <position position="32"/>
    </location>
</feature>
<sequence length="148" mass="16443">MRAYFVLLVAATAILTYGGATATYSTSKGEMNLTGTVENNRPTRSLRVAPSGGNGEERSWSTIYGISRSKAETVRDWLMPRLNQGMDVQALAREMGITSRQAATQHQNWDALVKYLKMYNYAVRGEKMSKSMAESVLLHNVLTAKNNF</sequence>
<gene>
    <name evidence="4" type="primary">SFI7</name>
    <name type="ORF">PITG_18215</name>
</gene>
<comment type="function">
    <text evidence="3">Effector that suppresses flg22-induced post-translational MAP kinase activation in tomato but not in Arabidopsis. The perception of highly conserved pathogen- or microbe-associated molecular patterns (PAMPs/MAMPs), such as flg22, triggers converging signaling pathways recruiting MAP kinase cascades and inducing transcriptional re-programming, yielding a generic antimicrobial response (PubMed:24763622). Also partially attenuates INF1-triggered cell death (PubMed:24763622).</text>
</comment>
<comment type="subcellular location">
    <subcellularLocation>
        <location evidence="3">Secreted</location>
    </subcellularLocation>
    <subcellularLocation>
        <location evidence="3">Host cytoplasm</location>
    </subcellularLocation>
    <subcellularLocation>
        <location evidence="3">Host cell membrane</location>
    </subcellularLocation>
</comment>
<comment type="domain">
    <text evidence="6">The RxLR-dEER motif acts to carry the protein into the host cell cytoplasm through binding to cell surface phosphatidylinositol-3-phosphate.</text>
</comment>
<comment type="similarity">
    <text evidence="5">Belongs to the RxLR effector family.</text>
</comment>